<protein>
    <recommendedName>
        <fullName evidence="1">Chaperone protein DnaK</fullName>
    </recommendedName>
    <alternativeName>
        <fullName evidence="1">HSP70</fullName>
    </alternativeName>
    <alternativeName>
        <fullName evidence="1">Heat shock 70 kDa protein</fullName>
    </alternativeName>
    <alternativeName>
        <fullName evidence="1">Heat shock protein 70</fullName>
    </alternativeName>
</protein>
<name>DNAK_CAMC1</name>
<sequence length="623" mass="66939">MSKVIGIDLGTTNSCVSVFERGESKVIPNKEGKNTTPSVVAFTDKGEILVGDVAKRQAVTNPEKTIYSIKRIMGLMSNEKNAEEAKARLPYHVVDRNGACAVEIAGKVYTPQEISAKILIKLKEDAEAYLGESVTDAVITVPAYFNDSQRKATKEAGTIAGLNVLRIINEPTAAALAYGLDKKEAEKILVYDLGGGTFDVTVLETGDNIVEVLATGGNAFLGGDDFDNKIIDWLVSEFKNETGIDLKGDIMALQRLKEAAENAKKELSSAQETEINLPFITADATGPKHLVKKLTRAKFEGMIDSLVGETITKINEVIKDAGLSKSDIKEVVMVGGSTRVPLVQEEVKKAFGKELNKSVNPDEVVAIGAAIQGAVIKGDVKDVLLLDVTPLSLGIETLGGVMTKIIEKGTTIPTKKSQVFSTAEDNQNAVTIMVLQGEREFARDNKSLGNFNLEGIPAAPRGVPQIEVEFDIDANGILTVSAKDKATGKAQNITISGSSGLSEDEINSMVKDAELHKEEDKKRKDAVEARNQADALVHQTEKSMSELGEKVPAEDRSNIEAALNDLKEVLKDENSSKEQIDAKVEALSKASHKLAEAMYKKDENAGANGGNKKDDDVIDAEVE</sequence>
<dbReference type="EMBL" id="CP000792">
    <property type="protein sequence ID" value="EAT98798.1"/>
    <property type="molecule type" value="Genomic_DNA"/>
</dbReference>
<dbReference type="RefSeq" id="WP_012140035.1">
    <property type="nucleotide sequence ID" value="NC_009802.2"/>
</dbReference>
<dbReference type="SMR" id="A7ZEB5"/>
<dbReference type="STRING" id="360104.CCC13826_2046"/>
<dbReference type="KEGG" id="cco:CCC13826_2046"/>
<dbReference type="eggNOG" id="COG0443">
    <property type="taxonomic scope" value="Bacteria"/>
</dbReference>
<dbReference type="HOGENOM" id="CLU_005965_2_1_7"/>
<dbReference type="OrthoDB" id="9766019at2"/>
<dbReference type="Proteomes" id="UP000001121">
    <property type="component" value="Chromosome"/>
</dbReference>
<dbReference type="GO" id="GO:0005524">
    <property type="term" value="F:ATP binding"/>
    <property type="evidence" value="ECO:0007669"/>
    <property type="project" value="UniProtKB-UniRule"/>
</dbReference>
<dbReference type="GO" id="GO:0140662">
    <property type="term" value="F:ATP-dependent protein folding chaperone"/>
    <property type="evidence" value="ECO:0007669"/>
    <property type="project" value="InterPro"/>
</dbReference>
<dbReference type="GO" id="GO:0051082">
    <property type="term" value="F:unfolded protein binding"/>
    <property type="evidence" value="ECO:0007669"/>
    <property type="project" value="InterPro"/>
</dbReference>
<dbReference type="CDD" id="cd10234">
    <property type="entry name" value="ASKHA_NBD_HSP70_DnaK-like"/>
    <property type="match status" value="1"/>
</dbReference>
<dbReference type="FunFam" id="2.60.34.10:FF:000014">
    <property type="entry name" value="Chaperone protein DnaK HSP70"/>
    <property type="match status" value="1"/>
</dbReference>
<dbReference type="FunFam" id="1.20.1270.10:FF:000001">
    <property type="entry name" value="Molecular chaperone DnaK"/>
    <property type="match status" value="1"/>
</dbReference>
<dbReference type="FunFam" id="3.30.420.40:FF:000004">
    <property type="entry name" value="Molecular chaperone DnaK"/>
    <property type="match status" value="1"/>
</dbReference>
<dbReference type="FunFam" id="3.90.640.10:FF:000003">
    <property type="entry name" value="Molecular chaperone DnaK"/>
    <property type="match status" value="1"/>
</dbReference>
<dbReference type="Gene3D" id="1.20.1270.10">
    <property type="match status" value="1"/>
</dbReference>
<dbReference type="Gene3D" id="3.30.420.40">
    <property type="match status" value="2"/>
</dbReference>
<dbReference type="Gene3D" id="3.90.640.10">
    <property type="entry name" value="Actin, Chain A, domain 4"/>
    <property type="match status" value="1"/>
</dbReference>
<dbReference type="Gene3D" id="2.60.34.10">
    <property type="entry name" value="Substrate Binding Domain Of DNAk, Chain A, domain 1"/>
    <property type="match status" value="1"/>
</dbReference>
<dbReference type="HAMAP" id="MF_00332">
    <property type="entry name" value="DnaK"/>
    <property type="match status" value="1"/>
</dbReference>
<dbReference type="InterPro" id="IPR043129">
    <property type="entry name" value="ATPase_NBD"/>
</dbReference>
<dbReference type="InterPro" id="IPR012725">
    <property type="entry name" value="Chaperone_DnaK"/>
</dbReference>
<dbReference type="InterPro" id="IPR018181">
    <property type="entry name" value="Heat_shock_70_CS"/>
</dbReference>
<dbReference type="InterPro" id="IPR029048">
    <property type="entry name" value="HSP70_C_sf"/>
</dbReference>
<dbReference type="InterPro" id="IPR029047">
    <property type="entry name" value="HSP70_peptide-bd_sf"/>
</dbReference>
<dbReference type="InterPro" id="IPR013126">
    <property type="entry name" value="Hsp_70_fam"/>
</dbReference>
<dbReference type="NCBIfam" id="NF001413">
    <property type="entry name" value="PRK00290.1"/>
    <property type="match status" value="1"/>
</dbReference>
<dbReference type="NCBIfam" id="TIGR02350">
    <property type="entry name" value="prok_dnaK"/>
    <property type="match status" value="1"/>
</dbReference>
<dbReference type="PANTHER" id="PTHR19375">
    <property type="entry name" value="HEAT SHOCK PROTEIN 70KDA"/>
    <property type="match status" value="1"/>
</dbReference>
<dbReference type="Pfam" id="PF00012">
    <property type="entry name" value="HSP70"/>
    <property type="match status" value="1"/>
</dbReference>
<dbReference type="PRINTS" id="PR00301">
    <property type="entry name" value="HEATSHOCK70"/>
</dbReference>
<dbReference type="SUPFAM" id="SSF53067">
    <property type="entry name" value="Actin-like ATPase domain"/>
    <property type="match status" value="2"/>
</dbReference>
<dbReference type="SUPFAM" id="SSF100934">
    <property type="entry name" value="Heat shock protein 70kD (HSP70), C-terminal subdomain"/>
    <property type="match status" value="1"/>
</dbReference>
<dbReference type="SUPFAM" id="SSF100920">
    <property type="entry name" value="Heat shock protein 70kD (HSP70), peptide-binding domain"/>
    <property type="match status" value="1"/>
</dbReference>
<dbReference type="PROSITE" id="PS00297">
    <property type="entry name" value="HSP70_1"/>
    <property type="match status" value="1"/>
</dbReference>
<dbReference type="PROSITE" id="PS00329">
    <property type="entry name" value="HSP70_2"/>
    <property type="match status" value="1"/>
</dbReference>
<dbReference type="PROSITE" id="PS01036">
    <property type="entry name" value="HSP70_3"/>
    <property type="match status" value="1"/>
</dbReference>
<gene>
    <name evidence="1" type="primary">dnaK</name>
    <name type="ordered locus">Ccon26_12700</name>
    <name type="ORF">CCC13826_2046</name>
</gene>
<feature type="chain" id="PRO_1000072033" description="Chaperone protein DnaK">
    <location>
        <begin position="1"/>
        <end position="623"/>
    </location>
</feature>
<feature type="region of interest" description="Disordered" evidence="2">
    <location>
        <begin position="600"/>
        <end position="623"/>
    </location>
</feature>
<feature type="modified residue" description="Phosphothreonine; by autocatalysis" evidence="1">
    <location>
        <position position="197"/>
    </location>
</feature>
<keyword id="KW-0067">ATP-binding</keyword>
<keyword id="KW-0143">Chaperone</keyword>
<keyword id="KW-0547">Nucleotide-binding</keyword>
<keyword id="KW-0597">Phosphoprotein</keyword>
<keyword id="KW-0346">Stress response</keyword>
<proteinExistence type="inferred from homology"/>
<reference key="1">
    <citation type="submission" date="2007-10" db="EMBL/GenBank/DDBJ databases">
        <title>Genome sequence of Campylobacter concisus 13826 isolated from human feces.</title>
        <authorList>
            <person name="Fouts D.E."/>
            <person name="Mongodin E.F."/>
            <person name="Puiu D."/>
            <person name="Sebastian Y."/>
            <person name="Miller W.G."/>
            <person name="Mandrell R.E."/>
            <person name="On S."/>
            <person name="Nelson K.E."/>
        </authorList>
    </citation>
    <scope>NUCLEOTIDE SEQUENCE [LARGE SCALE GENOMIC DNA]</scope>
    <source>
        <strain>13826</strain>
    </source>
</reference>
<evidence type="ECO:0000255" key="1">
    <source>
        <dbReference type="HAMAP-Rule" id="MF_00332"/>
    </source>
</evidence>
<evidence type="ECO:0000256" key="2">
    <source>
        <dbReference type="SAM" id="MobiDB-lite"/>
    </source>
</evidence>
<comment type="function">
    <text evidence="1">Acts as a chaperone.</text>
</comment>
<comment type="induction">
    <text evidence="1">By stress conditions e.g. heat shock.</text>
</comment>
<comment type="similarity">
    <text evidence="1">Belongs to the heat shock protein 70 family.</text>
</comment>
<accession>A7ZEB5</accession>
<organism>
    <name type="scientific">Campylobacter concisus (strain 13826)</name>
    <dbReference type="NCBI Taxonomy" id="360104"/>
    <lineage>
        <taxon>Bacteria</taxon>
        <taxon>Pseudomonadati</taxon>
        <taxon>Campylobacterota</taxon>
        <taxon>Epsilonproteobacteria</taxon>
        <taxon>Campylobacterales</taxon>
        <taxon>Campylobacteraceae</taxon>
        <taxon>Campylobacter</taxon>
    </lineage>
</organism>